<sequence>MATTKEDVLEFISNLSVLELSELVKEFEEKFGVTAQATVVAAGGAAAGGEAAEEQTEFNVVLTDAGAKKINAIKVVRAITGLGLKEAKAAVEETPTVLKEGVSKEEAEEFKKQIEEAGASCELK</sequence>
<proteinExistence type="inferred from homology"/>
<reference key="1">
    <citation type="journal article" date="2007" name="Proc. Natl. Acad. Sci. U.S.A.">
        <title>Deep-sea vent epsilon-proteobacterial genomes provide insights into emergence of pathogens.</title>
        <authorList>
            <person name="Nakagawa S."/>
            <person name="Takaki Y."/>
            <person name="Shimamura S."/>
            <person name="Reysenbach A.-L."/>
            <person name="Takai K."/>
            <person name="Horikoshi K."/>
        </authorList>
    </citation>
    <scope>NUCLEOTIDE SEQUENCE [LARGE SCALE GENOMIC DNA]</scope>
    <source>
        <strain>NBC37-1</strain>
    </source>
</reference>
<feature type="chain" id="PRO_1000007101" description="Large ribosomal subunit protein bL12">
    <location>
        <begin position="1"/>
        <end position="124"/>
    </location>
</feature>
<evidence type="ECO:0000255" key="1">
    <source>
        <dbReference type="HAMAP-Rule" id="MF_00368"/>
    </source>
</evidence>
<evidence type="ECO:0000305" key="2"/>
<accession>A6Q6I1</accession>
<comment type="function">
    <text evidence="1">Forms part of the ribosomal stalk which helps the ribosome interact with GTP-bound translation factors. Is thus essential for accurate translation.</text>
</comment>
<comment type="subunit">
    <text evidence="1">Homodimer. Part of the ribosomal stalk of the 50S ribosomal subunit. Forms a multimeric L10(L12)X complex, where L10 forms an elongated spine to which 2 to 4 L12 dimers bind in a sequential fashion. Binds GTP-bound translation factors.</text>
</comment>
<comment type="similarity">
    <text evidence="1">Belongs to the bacterial ribosomal protein bL12 family.</text>
</comment>
<protein>
    <recommendedName>
        <fullName evidence="1">Large ribosomal subunit protein bL12</fullName>
    </recommendedName>
    <alternativeName>
        <fullName evidence="2">50S ribosomal protein L7/L12</fullName>
    </alternativeName>
</protein>
<dbReference type="EMBL" id="AP009179">
    <property type="protein sequence ID" value="BAF71090.1"/>
    <property type="molecule type" value="Genomic_DNA"/>
</dbReference>
<dbReference type="RefSeq" id="WP_011979823.1">
    <property type="nucleotide sequence ID" value="NC_009663.1"/>
</dbReference>
<dbReference type="SMR" id="A6Q6I1"/>
<dbReference type="STRING" id="387093.SUN_0130"/>
<dbReference type="KEGG" id="sun:SUN_0130"/>
<dbReference type="eggNOG" id="COG0222">
    <property type="taxonomic scope" value="Bacteria"/>
</dbReference>
<dbReference type="HOGENOM" id="CLU_086499_3_0_7"/>
<dbReference type="OrthoDB" id="9811748at2"/>
<dbReference type="Proteomes" id="UP000006378">
    <property type="component" value="Chromosome"/>
</dbReference>
<dbReference type="GO" id="GO:0022625">
    <property type="term" value="C:cytosolic large ribosomal subunit"/>
    <property type="evidence" value="ECO:0007669"/>
    <property type="project" value="TreeGrafter"/>
</dbReference>
<dbReference type="GO" id="GO:0003729">
    <property type="term" value="F:mRNA binding"/>
    <property type="evidence" value="ECO:0007669"/>
    <property type="project" value="TreeGrafter"/>
</dbReference>
<dbReference type="GO" id="GO:0003735">
    <property type="term" value="F:structural constituent of ribosome"/>
    <property type="evidence" value="ECO:0007669"/>
    <property type="project" value="InterPro"/>
</dbReference>
<dbReference type="GO" id="GO:0006412">
    <property type="term" value="P:translation"/>
    <property type="evidence" value="ECO:0007669"/>
    <property type="project" value="UniProtKB-UniRule"/>
</dbReference>
<dbReference type="CDD" id="cd00387">
    <property type="entry name" value="Ribosomal_L7_L12"/>
    <property type="match status" value="1"/>
</dbReference>
<dbReference type="FunFam" id="3.30.1390.10:FF:000001">
    <property type="entry name" value="50S ribosomal protein L7/L12"/>
    <property type="match status" value="1"/>
</dbReference>
<dbReference type="Gene3D" id="3.30.1390.10">
    <property type="match status" value="1"/>
</dbReference>
<dbReference type="Gene3D" id="1.20.5.710">
    <property type="entry name" value="Single helix bin"/>
    <property type="match status" value="1"/>
</dbReference>
<dbReference type="HAMAP" id="MF_00368">
    <property type="entry name" value="Ribosomal_bL12"/>
    <property type="match status" value="1"/>
</dbReference>
<dbReference type="InterPro" id="IPR000206">
    <property type="entry name" value="Ribosomal_bL12"/>
</dbReference>
<dbReference type="InterPro" id="IPR013823">
    <property type="entry name" value="Ribosomal_bL12_C"/>
</dbReference>
<dbReference type="InterPro" id="IPR014719">
    <property type="entry name" value="Ribosomal_bL12_C/ClpS-like"/>
</dbReference>
<dbReference type="InterPro" id="IPR008932">
    <property type="entry name" value="Ribosomal_bL12_oligo"/>
</dbReference>
<dbReference type="InterPro" id="IPR036235">
    <property type="entry name" value="Ribosomal_bL12_oligo_N_sf"/>
</dbReference>
<dbReference type="NCBIfam" id="TIGR00855">
    <property type="entry name" value="L12"/>
    <property type="match status" value="1"/>
</dbReference>
<dbReference type="PANTHER" id="PTHR45987">
    <property type="entry name" value="39S RIBOSOMAL PROTEIN L12"/>
    <property type="match status" value="1"/>
</dbReference>
<dbReference type="PANTHER" id="PTHR45987:SF4">
    <property type="entry name" value="LARGE RIBOSOMAL SUBUNIT PROTEIN BL12M"/>
    <property type="match status" value="1"/>
</dbReference>
<dbReference type="Pfam" id="PF00542">
    <property type="entry name" value="Ribosomal_L12"/>
    <property type="match status" value="1"/>
</dbReference>
<dbReference type="Pfam" id="PF16320">
    <property type="entry name" value="Ribosomal_L12_N"/>
    <property type="match status" value="1"/>
</dbReference>
<dbReference type="SUPFAM" id="SSF54736">
    <property type="entry name" value="ClpS-like"/>
    <property type="match status" value="1"/>
</dbReference>
<dbReference type="SUPFAM" id="SSF48300">
    <property type="entry name" value="Ribosomal protein L7/12, oligomerisation (N-terminal) domain"/>
    <property type="match status" value="1"/>
</dbReference>
<name>RL7_SULNB</name>
<organism>
    <name type="scientific">Sulfurovum sp. (strain NBC37-1)</name>
    <dbReference type="NCBI Taxonomy" id="387093"/>
    <lineage>
        <taxon>Bacteria</taxon>
        <taxon>Pseudomonadati</taxon>
        <taxon>Campylobacterota</taxon>
        <taxon>Epsilonproteobacteria</taxon>
        <taxon>Campylobacterales</taxon>
        <taxon>Sulfurovaceae</taxon>
        <taxon>Sulfurovum</taxon>
    </lineage>
</organism>
<keyword id="KW-0687">Ribonucleoprotein</keyword>
<keyword id="KW-0689">Ribosomal protein</keyword>
<gene>
    <name evidence="1" type="primary">rplL</name>
    <name type="ordered locus">SUN_0130</name>
</gene>